<name>ASPN_STRMK</name>
<comment type="function">
    <text evidence="2">Metalloprotease, specifically cleaves on the N-terminal side of aspartyl, glutamyl and cysteic acid residues.</text>
</comment>
<comment type="catalytic activity">
    <reaction evidence="2">
        <text>Cleavage of Xaa-|-Asp, Xaa-|-Glu and Xaa-|-cysteic acid bonds.</text>
        <dbReference type="EC" id="3.4.24.33"/>
    </reaction>
</comment>
<comment type="cofactor">
    <cofactor evidence="1">
        <name>Zn(2+)</name>
        <dbReference type="ChEBI" id="CHEBI:29105"/>
    </cofactor>
    <text evidence="1">Binds 1 zinc ion per subunit.</text>
</comment>
<comment type="similarity">
    <text evidence="5">Belongs to the peptidase M72 family.</text>
</comment>
<reference evidence="6" key="1">
    <citation type="journal article" date="2008" name="Genome Biol.">
        <title>The complete genome, comparative and functional analysis of Stenotrophomonas maltophilia reveals an organism heavily shielded by drug resistance determinants.</title>
        <authorList>
            <person name="Crossman L.C."/>
            <person name="Gould V.C."/>
            <person name="Dow J.M."/>
            <person name="Vernikos G.S."/>
            <person name="Okazaki A."/>
            <person name="Sebaihia M."/>
            <person name="Saunders D."/>
            <person name="Arrowsmith C."/>
            <person name="Carver T."/>
            <person name="Peters N."/>
            <person name="Adlem E."/>
            <person name="Kerhornou A."/>
            <person name="Lord A."/>
            <person name="Murphy L."/>
            <person name="Seeger K."/>
            <person name="Squares R."/>
            <person name="Rutter S."/>
            <person name="Quail M.A."/>
            <person name="Rajandream M.A."/>
            <person name="Harris D."/>
            <person name="Churcher C."/>
            <person name="Bentley S.D."/>
            <person name="Parkhill J."/>
            <person name="Thomson N.R."/>
            <person name="Avison M.B."/>
        </authorList>
    </citation>
    <scope>NUCLEOTIDE SEQUENCE [LARGE SCALE GENOMIC DNA]</scope>
    <source>
        <strain>K279a</strain>
    </source>
</reference>
<accession>B2FQP3</accession>
<evidence type="ECO:0000250" key="1">
    <source>
        <dbReference type="UniProtKB" id="O75173"/>
    </source>
</evidence>
<evidence type="ECO:0000250" key="2">
    <source>
        <dbReference type="UniProtKB" id="Q9R4J4"/>
    </source>
</evidence>
<evidence type="ECO:0000255" key="3"/>
<evidence type="ECO:0000255" key="4">
    <source>
        <dbReference type="PROSITE-ProRule" id="PRU10095"/>
    </source>
</evidence>
<evidence type="ECO:0000305" key="5"/>
<evidence type="ECO:0000312" key="6">
    <source>
        <dbReference type="EMBL" id="CAQ44534.1"/>
    </source>
</evidence>
<proteinExistence type="inferred from homology"/>
<gene>
    <name type="ordered locus">Smlt0970</name>
</gene>
<keyword id="KW-0378">Hydrolase</keyword>
<keyword id="KW-0479">Metal-binding</keyword>
<keyword id="KW-0482">Metalloprotease</keyword>
<keyword id="KW-0645">Protease</keyword>
<keyword id="KW-1185">Reference proteome</keyword>
<keyword id="KW-0732">Signal</keyword>
<keyword id="KW-0862">Zinc</keyword>
<organism>
    <name type="scientific">Stenotrophomonas maltophilia (strain K279a)</name>
    <dbReference type="NCBI Taxonomy" id="522373"/>
    <lineage>
        <taxon>Bacteria</taxon>
        <taxon>Pseudomonadati</taxon>
        <taxon>Pseudomonadota</taxon>
        <taxon>Gammaproteobacteria</taxon>
        <taxon>Lysobacterales</taxon>
        <taxon>Lysobacteraceae</taxon>
        <taxon>Stenotrophomonas</taxon>
        <taxon>Stenotrophomonas maltophilia group</taxon>
    </lineage>
</organism>
<dbReference type="EC" id="3.4.24.33"/>
<dbReference type="EMBL" id="AM743169">
    <property type="protein sequence ID" value="CAQ44534.1"/>
    <property type="molecule type" value="Genomic_DNA"/>
</dbReference>
<dbReference type="RefSeq" id="WP_012479256.1">
    <property type="nucleotide sequence ID" value="NC_010943.1"/>
</dbReference>
<dbReference type="SMR" id="B2FQP3"/>
<dbReference type="EnsemblBacteria" id="CAQ44534">
    <property type="protein sequence ID" value="CAQ44534"/>
    <property type="gene ID" value="Smlt0970"/>
</dbReference>
<dbReference type="KEGG" id="sml:Smlt0970"/>
<dbReference type="PATRIC" id="fig|522373.3.peg.936"/>
<dbReference type="eggNOG" id="COG3291">
    <property type="taxonomic scope" value="Bacteria"/>
</dbReference>
<dbReference type="HOGENOM" id="CLU_658751_0_0_6"/>
<dbReference type="Proteomes" id="UP000008840">
    <property type="component" value="Chromosome"/>
</dbReference>
<dbReference type="GO" id="GO:0046872">
    <property type="term" value="F:metal ion binding"/>
    <property type="evidence" value="ECO:0007669"/>
    <property type="project" value="UniProtKB-KW"/>
</dbReference>
<dbReference type="GO" id="GO:0008237">
    <property type="term" value="F:metallopeptidase activity"/>
    <property type="evidence" value="ECO:0007669"/>
    <property type="project" value="UniProtKB-KW"/>
</dbReference>
<dbReference type="GO" id="GO:0006508">
    <property type="term" value="P:proteolysis"/>
    <property type="evidence" value="ECO:0007669"/>
    <property type="project" value="UniProtKB-KW"/>
</dbReference>
<dbReference type="Gene3D" id="3.40.390.10">
    <property type="entry name" value="Collagenase (Catalytic Domain)"/>
    <property type="match status" value="1"/>
</dbReference>
<dbReference type="InterPro" id="IPR024079">
    <property type="entry name" value="MetalloPept_cat_dom_sf"/>
</dbReference>
<dbReference type="Pfam" id="PF13688">
    <property type="entry name" value="Reprolysin_5"/>
    <property type="match status" value="1"/>
</dbReference>
<dbReference type="SUPFAM" id="SSF55486">
    <property type="entry name" value="Metalloproteases ('zincins'), catalytic domain"/>
    <property type="match status" value="1"/>
</dbReference>
<dbReference type="PROSITE" id="PS00142">
    <property type="entry name" value="ZINC_PROTEASE"/>
    <property type="match status" value="1"/>
</dbReference>
<feature type="signal peptide" evidence="3">
    <location>
        <begin position="1"/>
        <end position="25"/>
    </location>
</feature>
<feature type="chain" id="PRO_5000342480" description="Peptidyl-Asp metalloendopeptidase" evidence="3">
    <location>
        <begin position="26"/>
        <end position="417"/>
    </location>
</feature>
<feature type="active site" evidence="1 4">
    <location>
        <position position="328"/>
    </location>
</feature>
<feature type="binding site" evidence="1 4">
    <location>
        <position position="327"/>
    </location>
    <ligand>
        <name>Zn(2+)</name>
        <dbReference type="ChEBI" id="CHEBI:29105"/>
        <note>catalytic</note>
    </ligand>
</feature>
<feature type="binding site" evidence="1 4">
    <location>
        <position position="331"/>
    </location>
    <ligand>
        <name>Zn(2+)</name>
        <dbReference type="ChEBI" id="CHEBI:29105"/>
        <note>catalytic</note>
    </ligand>
</feature>
<feature type="binding site" evidence="1 4">
    <location>
        <position position="337"/>
    </location>
    <ligand>
        <name>Zn(2+)</name>
        <dbReference type="ChEBI" id="CHEBI:29105"/>
        <note>catalytic</note>
    </ligand>
</feature>
<sequence length="417" mass="44141">MLSRSIGKAAGGLVLGLSVAAAAHAAPLFEPVTVISRASANSEPALGKLLATPSTATVQEVRVDAAATAQPQLEFELLGKRVQAVRSKVEALPDGGSIWYGQFRSPSDRLTAATSSGQDDPGNSLILVRSGDTITGSIRKDGKLYRLRPLGNRHVLVEVDESRMPADHPADYNQLPKIPMADNDHIGIAQASSGTPATIRVLVVATNAAVTAYGGNMQSLVQLAVAESNQGYVNSNVGLTLQLAGYETTNYSESGNFTTDLSRFRGTSDGYMDSIHTSRNTTAADVGVLLINNSAYCGLASGIGSTASTAFAAVYWDCATGYYSFAHEIGHLQSARHDIATDSSTSPYAYGHGYRYEPATGTGWRTIMAYNCTRSCPRLNYWSNPNISYNGIPMGNASTADNQRVLVNTKATIAAFR</sequence>
<protein>
    <recommendedName>
        <fullName evidence="2">Peptidyl-Asp metalloendopeptidase</fullName>
        <ecNumber>3.4.24.33</ecNumber>
    </recommendedName>
    <alternativeName>
        <fullName evidence="2">Endopeptidase Asp-N</fullName>
    </alternativeName>
</protein>